<accession>B3Q8S3</accession>
<organism>
    <name type="scientific">Rhodopseudomonas palustris (strain TIE-1)</name>
    <dbReference type="NCBI Taxonomy" id="395960"/>
    <lineage>
        <taxon>Bacteria</taxon>
        <taxon>Pseudomonadati</taxon>
        <taxon>Pseudomonadota</taxon>
        <taxon>Alphaproteobacteria</taxon>
        <taxon>Hyphomicrobiales</taxon>
        <taxon>Nitrobacteraceae</taxon>
        <taxon>Rhodopseudomonas</taxon>
    </lineage>
</organism>
<evidence type="ECO:0000255" key="1">
    <source>
        <dbReference type="HAMAP-Rule" id="MF_01871"/>
    </source>
</evidence>
<reference key="1">
    <citation type="submission" date="2008-05" db="EMBL/GenBank/DDBJ databases">
        <title>Complete sequence of Rhodopseudomonas palustris TIE-1.</title>
        <authorList>
            <consortium name="US DOE Joint Genome Institute"/>
            <person name="Lucas S."/>
            <person name="Copeland A."/>
            <person name="Lapidus A."/>
            <person name="Glavina del Rio T."/>
            <person name="Dalin E."/>
            <person name="Tice H."/>
            <person name="Pitluck S."/>
            <person name="Chain P."/>
            <person name="Malfatti S."/>
            <person name="Shin M."/>
            <person name="Vergez L."/>
            <person name="Lang D."/>
            <person name="Schmutz J."/>
            <person name="Larimer F."/>
            <person name="Land M."/>
            <person name="Hauser L."/>
            <person name="Kyrpides N."/>
            <person name="Mikhailova N."/>
            <person name="Emerson D."/>
            <person name="Newman D.K."/>
            <person name="Roden E."/>
            <person name="Richardson P."/>
        </authorList>
    </citation>
    <scope>NUCLEOTIDE SEQUENCE [LARGE SCALE GENOMIC DNA]</scope>
    <source>
        <strain>TIE-1</strain>
    </source>
</reference>
<proteinExistence type="inferred from homology"/>
<feature type="chain" id="PRO_0000387293" description="Probable inorganic carbon transporter subunit DabA">
    <location>
        <begin position="1"/>
        <end position="808"/>
    </location>
</feature>
<feature type="binding site" evidence="1">
    <location>
        <position position="335"/>
    </location>
    <ligand>
        <name>Zn(2+)</name>
        <dbReference type="ChEBI" id="CHEBI:29105"/>
    </ligand>
</feature>
<feature type="binding site" evidence="1">
    <location>
        <position position="337"/>
    </location>
    <ligand>
        <name>Zn(2+)</name>
        <dbReference type="ChEBI" id="CHEBI:29105"/>
    </ligand>
</feature>
<feature type="binding site" evidence="1">
    <location>
        <position position="497"/>
    </location>
    <ligand>
        <name>Zn(2+)</name>
        <dbReference type="ChEBI" id="CHEBI:29105"/>
    </ligand>
</feature>
<feature type="binding site" evidence="1">
    <location>
        <position position="512"/>
    </location>
    <ligand>
        <name>Zn(2+)</name>
        <dbReference type="ChEBI" id="CHEBI:29105"/>
    </ligand>
</feature>
<dbReference type="EMBL" id="CP001096">
    <property type="protein sequence ID" value="ACF01907.1"/>
    <property type="molecule type" value="Genomic_DNA"/>
</dbReference>
<dbReference type="RefSeq" id="WP_012496475.1">
    <property type="nucleotide sequence ID" value="NC_011004.1"/>
</dbReference>
<dbReference type="SMR" id="B3Q8S3"/>
<dbReference type="KEGG" id="rpt:Rpal_3405"/>
<dbReference type="HOGENOM" id="CLU_009885_1_0_5"/>
<dbReference type="OrthoDB" id="9805101at2"/>
<dbReference type="Proteomes" id="UP000001725">
    <property type="component" value="Chromosome"/>
</dbReference>
<dbReference type="GO" id="GO:0005886">
    <property type="term" value="C:plasma membrane"/>
    <property type="evidence" value="ECO:0007669"/>
    <property type="project" value="UniProtKB-SubCell"/>
</dbReference>
<dbReference type="GO" id="GO:0008270">
    <property type="term" value="F:zinc ion binding"/>
    <property type="evidence" value="ECO:0007669"/>
    <property type="project" value="UniProtKB-UniRule"/>
</dbReference>
<dbReference type="HAMAP" id="MF_01871">
    <property type="entry name" value="DabA"/>
    <property type="match status" value="1"/>
</dbReference>
<dbReference type="InterPro" id="IPR018752">
    <property type="entry name" value="DabA"/>
</dbReference>
<dbReference type="PANTHER" id="PTHR38344:SF1">
    <property type="entry name" value="INORGANIC CARBON TRANSPORTER SUBUNIT DABA-RELATED"/>
    <property type="match status" value="1"/>
</dbReference>
<dbReference type="PANTHER" id="PTHR38344">
    <property type="entry name" value="UPF0753 PROTEIN AQ_863"/>
    <property type="match status" value="1"/>
</dbReference>
<dbReference type="Pfam" id="PF10070">
    <property type="entry name" value="DabA"/>
    <property type="match status" value="1"/>
</dbReference>
<gene>
    <name evidence="1" type="primary">dabA</name>
    <name type="ordered locus">Rpal_3405</name>
</gene>
<protein>
    <recommendedName>
        <fullName evidence="1">Probable inorganic carbon transporter subunit DabA</fullName>
    </recommendedName>
</protein>
<comment type="function">
    <text evidence="1">Part of an energy-coupled inorganic carbon pump.</text>
</comment>
<comment type="cofactor">
    <cofactor evidence="1">
        <name>Zn(2+)</name>
        <dbReference type="ChEBI" id="CHEBI:29105"/>
    </cofactor>
</comment>
<comment type="subunit">
    <text evidence="1">Forms a complex with DabB.</text>
</comment>
<comment type="subcellular location">
    <subcellularLocation>
        <location evidence="1">Cell inner membrane</location>
        <topology evidence="1">Peripheral membrane protein</topology>
    </subcellularLocation>
</comment>
<comment type="similarity">
    <text evidence="1">Belongs to the inorganic carbon transporter (TC 9.A.2) DabA family.</text>
</comment>
<name>DABA_RHOPT</name>
<sequence>MLMTKPPVPQLNLTAVHEAAERAARAIPPLWPLESSVAVNPFLGQIGEPLAVAAARLRRVAGAAVTMPRAWYAERIASGELSDVDLAAAIDAATPTTRPLTIAELKRAAQMEIAPPQALPTVADLASAVSGFDWTGFVAERISAWASGYFDRGQALWAAPKGPNAYAAWRLTATHDLTPEIFSITGFAADVAAAPESADAALIRAVEQLGLSEAASESYFHRLLVGLGGWAQLARYRLWQAELSGSTDTTVTDLLAVRAVWDSALLRKYQPQIAAEWTDAINGYAQPLQPTEDDQINAILQDAVERAAQRKLQTVLTASSQPKPEDRPALQMAFCIDVRSEPFRRALESLDPRIRTLGFGGFFGLPIAHRRFASDVVEARLPVLLPPRVTTSCSGHTHAHEANDRAKRVAARAKRAWGRFKLAAISSFAFVESMGPVYVAKLLSDGLRPGTRTTNTDPVPQFDPPLALGARVDTAEAVLRAMSLTGPFAPLVLIAGHGASVVNNPHASALHCGACGGFPGDVNARLLAGLLNDPEVRTALAGRDIAIPADTLFVGALHDTTTDAVTLYDADHHSPAHAAALAQTRDWLATAGALTRSERALRLPRAATGGAIARRARDWAEVRPEWALAGCRAFIAAPRSHTSGRDLQGQAFLHDYDWRKDTDFSVLELILTAPVVVASWISLQYYGSTVAPETFGAGNKLLHNVTGGIGVVEGNGGLLRSGLPWQSVHDGERLVHQPLRLSVLIEAPHEAISTILDRYPEVRALFDNGWMHLLALDDNGRMHWRYGGDGGWERADNPPANQRVASFE</sequence>
<keyword id="KW-0997">Cell inner membrane</keyword>
<keyword id="KW-1003">Cell membrane</keyword>
<keyword id="KW-0472">Membrane</keyword>
<keyword id="KW-0479">Metal-binding</keyword>
<keyword id="KW-0813">Transport</keyword>
<keyword id="KW-0862">Zinc</keyword>